<feature type="chain" id="PRO_0000250093" description="Anhydro-N-acetylmuramic acid kinase">
    <location>
        <begin position="1"/>
        <end position="365"/>
    </location>
</feature>
<feature type="binding site" evidence="1">
    <location>
        <begin position="9"/>
        <end position="16"/>
    </location>
    <ligand>
        <name>ATP</name>
        <dbReference type="ChEBI" id="CHEBI:30616"/>
    </ligand>
</feature>
<keyword id="KW-0067">ATP-binding</keyword>
<keyword id="KW-0119">Carbohydrate metabolism</keyword>
<keyword id="KW-0418">Kinase</keyword>
<keyword id="KW-0547">Nucleotide-binding</keyword>
<keyword id="KW-1185">Reference proteome</keyword>
<keyword id="KW-0808">Transferase</keyword>
<evidence type="ECO:0000255" key="1">
    <source>
        <dbReference type="HAMAP-Rule" id="MF_01270"/>
    </source>
</evidence>
<evidence type="ECO:0000305" key="2"/>
<dbReference type="EC" id="2.7.1.170" evidence="1"/>
<dbReference type="EMBL" id="AF300471">
    <property type="protein sequence ID" value="AAG42405.1"/>
    <property type="status" value="ALT_FRAME"/>
    <property type="molecule type" value="Genomic_DNA"/>
</dbReference>
<dbReference type="EMBL" id="AE008692">
    <property type="protein sequence ID" value="AAV90266.2"/>
    <property type="molecule type" value="Genomic_DNA"/>
</dbReference>
<dbReference type="RefSeq" id="WP_011241392.1">
    <property type="nucleotide sequence ID" value="NZ_CP035711.1"/>
</dbReference>
<dbReference type="SMR" id="Q5NLZ4"/>
<dbReference type="STRING" id="264203.ZMO1642"/>
<dbReference type="KEGG" id="zmo:ZMO1642"/>
<dbReference type="eggNOG" id="COG2377">
    <property type="taxonomic scope" value="Bacteria"/>
</dbReference>
<dbReference type="HOGENOM" id="CLU_038782_3_0_5"/>
<dbReference type="UniPathway" id="UPA00343"/>
<dbReference type="UniPathway" id="UPA00544"/>
<dbReference type="Proteomes" id="UP000001173">
    <property type="component" value="Chromosome"/>
</dbReference>
<dbReference type="GO" id="GO:0005524">
    <property type="term" value="F:ATP binding"/>
    <property type="evidence" value="ECO:0007669"/>
    <property type="project" value="UniProtKB-UniRule"/>
</dbReference>
<dbReference type="GO" id="GO:0016301">
    <property type="term" value="F:kinase activity"/>
    <property type="evidence" value="ECO:0007669"/>
    <property type="project" value="UniProtKB-KW"/>
</dbReference>
<dbReference type="GO" id="GO:0016773">
    <property type="term" value="F:phosphotransferase activity, alcohol group as acceptor"/>
    <property type="evidence" value="ECO:0007669"/>
    <property type="project" value="UniProtKB-UniRule"/>
</dbReference>
<dbReference type="GO" id="GO:0097175">
    <property type="term" value="P:1,6-anhydro-N-acetyl-beta-muramic acid catabolic process"/>
    <property type="evidence" value="ECO:0007669"/>
    <property type="project" value="UniProtKB-UniRule"/>
</dbReference>
<dbReference type="GO" id="GO:0006040">
    <property type="term" value="P:amino sugar metabolic process"/>
    <property type="evidence" value="ECO:0007669"/>
    <property type="project" value="InterPro"/>
</dbReference>
<dbReference type="GO" id="GO:0009254">
    <property type="term" value="P:peptidoglycan turnover"/>
    <property type="evidence" value="ECO:0007669"/>
    <property type="project" value="UniProtKB-UniRule"/>
</dbReference>
<dbReference type="Gene3D" id="3.30.420.40">
    <property type="match status" value="2"/>
</dbReference>
<dbReference type="HAMAP" id="MF_01270">
    <property type="entry name" value="AnhMurNAc_kinase"/>
    <property type="match status" value="1"/>
</dbReference>
<dbReference type="InterPro" id="IPR005338">
    <property type="entry name" value="Anhydro_N_Ac-Mur_kinase"/>
</dbReference>
<dbReference type="InterPro" id="IPR043129">
    <property type="entry name" value="ATPase_NBD"/>
</dbReference>
<dbReference type="NCBIfam" id="NF007141">
    <property type="entry name" value="PRK09585.1-5"/>
    <property type="match status" value="1"/>
</dbReference>
<dbReference type="PANTHER" id="PTHR30605">
    <property type="entry name" value="ANHYDRO-N-ACETYLMURAMIC ACID KINASE"/>
    <property type="match status" value="1"/>
</dbReference>
<dbReference type="PANTHER" id="PTHR30605:SF0">
    <property type="entry name" value="ANHYDRO-N-ACETYLMURAMIC ACID KINASE"/>
    <property type="match status" value="1"/>
</dbReference>
<dbReference type="Pfam" id="PF03702">
    <property type="entry name" value="AnmK"/>
    <property type="match status" value="1"/>
</dbReference>
<dbReference type="SUPFAM" id="SSF53067">
    <property type="entry name" value="Actin-like ATPase domain"/>
    <property type="match status" value="1"/>
</dbReference>
<name>ANMK_ZYMMO</name>
<gene>
    <name evidence="1" type="primary">anmK</name>
    <name type="ordered locus">ZMO1642</name>
</gene>
<sequence length="365" mass="39563">MLAIGLMSGTSLDGVDVALIETNGEKQVKPLNFASYPYSDTDKACLREACRRALTMAAPCFIPEDEVIYQAEHIVTLRHIQAVKDFLKKNALGNQAIKVIGFHGQTIAHRPDLGWTWQIGDGAALAQATKISVVDDFRSHDVQAGGEGAPLLPIYHWALFSEASHPLAVLNLGGIANITWIGADENDLIACDTGPANGMIDDWVKAKTGLDYDESGLIASKGVVHHDLVDAMMSQKFFSQLPPKSLDRSDFSIEAVANLSIEDGAATLTAFTAESVARSLSFFPERPSKIIVAGGGRHNVTMMKMLHDSLKMPVQPIEDFHLNGDATEAEGFAYLAVRRVFNKPISFPKTTGVPHPMTGGRIHYI</sequence>
<protein>
    <recommendedName>
        <fullName evidence="1">Anhydro-N-acetylmuramic acid kinase</fullName>
        <ecNumber evidence="1">2.7.1.170</ecNumber>
    </recommendedName>
    <alternativeName>
        <fullName evidence="1">AnhMurNAc kinase</fullName>
    </alternativeName>
</protein>
<comment type="function">
    <text evidence="1">Catalyzes the specific phosphorylation of 1,6-anhydro-N-acetylmuramic acid (anhMurNAc) with the simultaneous cleavage of the 1,6-anhydro ring, generating MurNAc-6-P. Is required for the utilization of anhMurNAc either imported from the medium or derived from its own cell wall murein, and thus plays a role in cell wall recycling.</text>
</comment>
<comment type="catalytic activity">
    <reaction evidence="1">
        <text>1,6-anhydro-N-acetyl-beta-muramate + ATP + H2O = N-acetyl-D-muramate 6-phosphate + ADP + H(+)</text>
        <dbReference type="Rhea" id="RHEA:24952"/>
        <dbReference type="ChEBI" id="CHEBI:15377"/>
        <dbReference type="ChEBI" id="CHEBI:15378"/>
        <dbReference type="ChEBI" id="CHEBI:30616"/>
        <dbReference type="ChEBI" id="CHEBI:58690"/>
        <dbReference type="ChEBI" id="CHEBI:58722"/>
        <dbReference type="ChEBI" id="CHEBI:456216"/>
        <dbReference type="EC" id="2.7.1.170"/>
    </reaction>
</comment>
<comment type="pathway">
    <text evidence="1">Amino-sugar metabolism; 1,6-anhydro-N-acetylmuramate degradation.</text>
</comment>
<comment type="pathway">
    <text evidence="1">Cell wall biogenesis; peptidoglycan recycling.</text>
</comment>
<comment type="similarity">
    <text evidence="1">Belongs to the anhydro-N-acetylmuramic acid kinase family.</text>
</comment>
<comment type="sequence caution" evidence="2">
    <conflict type="frameshift">
        <sequence resource="EMBL-CDS" id="AAG42405"/>
    </conflict>
</comment>
<reference key="1">
    <citation type="submission" date="2000-08" db="EMBL/GenBank/DDBJ databases">
        <title>Zymomonas mobilis ZM4 fosmid clone 43E12 complete sequence.</title>
        <authorList>
            <person name="Shin I.S."/>
            <person name="Kang H.S."/>
        </authorList>
    </citation>
    <scope>NUCLEOTIDE SEQUENCE [GENOMIC DNA]</scope>
    <source>
        <strain>ATCC 31821 / ZM4 / CP4</strain>
    </source>
</reference>
<reference key="2">
    <citation type="journal article" date="2005" name="Nat. Biotechnol.">
        <title>The genome sequence of the ethanologenic bacterium Zymomonas mobilis ZM4.</title>
        <authorList>
            <person name="Seo J.-S."/>
            <person name="Chong H."/>
            <person name="Park H.S."/>
            <person name="Yoon K.-O."/>
            <person name="Jung C."/>
            <person name="Kim J.J."/>
            <person name="Hong J.H."/>
            <person name="Kim H."/>
            <person name="Kim J.-H."/>
            <person name="Kil J.-I."/>
            <person name="Park C.J."/>
            <person name="Oh H.-M."/>
            <person name="Lee J.-S."/>
            <person name="Jin S.-J."/>
            <person name="Um H.-W."/>
            <person name="Lee H.-J."/>
            <person name="Oh S.-J."/>
            <person name="Kim J.Y."/>
            <person name="Kang H.L."/>
            <person name="Lee S.Y."/>
            <person name="Lee K.J."/>
            <person name="Kang H.S."/>
        </authorList>
    </citation>
    <scope>NUCLEOTIDE SEQUENCE [LARGE SCALE GENOMIC DNA]</scope>
    <source>
        <strain>ATCC 31821 / ZM4 / CP4</strain>
    </source>
</reference>
<accession>Q5NLZ4</accession>
<accession>Q9EZA1</accession>
<organism>
    <name type="scientific">Zymomonas mobilis subsp. mobilis (strain ATCC 31821 / ZM4 / CP4)</name>
    <dbReference type="NCBI Taxonomy" id="264203"/>
    <lineage>
        <taxon>Bacteria</taxon>
        <taxon>Pseudomonadati</taxon>
        <taxon>Pseudomonadota</taxon>
        <taxon>Alphaproteobacteria</taxon>
        <taxon>Sphingomonadales</taxon>
        <taxon>Zymomonadaceae</taxon>
        <taxon>Zymomonas</taxon>
    </lineage>
</organism>
<proteinExistence type="inferred from homology"/>